<keyword id="KW-1185">Reference proteome</keyword>
<keyword id="KW-0687">Ribonucleoprotein</keyword>
<keyword id="KW-0689">Ribosomal protein</keyword>
<keyword id="KW-0694">RNA-binding</keyword>
<keyword id="KW-0699">rRNA-binding</keyword>
<feature type="chain" id="PRO_0000173111" description="Large ribosomal subunit protein bL31">
    <location>
        <begin position="1"/>
        <end position="75"/>
    </location>
</feature>
<gene>
    <name evidence="1" type="primary">rpmE</name>
    <name type="ordered locus">GOX2398</name>
</gene>
<protein>
    <recommendedName>
        <fullName evidence="1">Large ribosomal subunit protein bL31</fullName>
    </recommendedName>
    <alternativeName>
        <fullName evidence="2">50S ribosomal protein L31</fullName>
    </alternativeName>
</protein>
<comment type="function">
    <text evidence="1">Binds the 23S rRNA.</text>
</comment>
<comment type="subunit">
    <text evidence="1">Part of the 50S ribosomal subunit.</text>
</comment>
<comment type="similarity">
    <text evidence="1">Belongs to the bacterial ribosomal protein bL31 family. Type A subfamily.</text>
</comment>
<organism>
    <name type="scientific">Gluconobacter oxydans (strain 621H)</name>
    <name type="common">Gluconobacter suboxydans</name>
    <dbReference type="NCBI Taxonomy" id="290633"/>
    <lineage>
        <taxon>Bacteria</taxon>
        <taxon>Pseudomonadati</taxon>
        <taxon>Pseudomonadota</taxon>
        <taxon>Alphaproteobacteria</taxon>
        <taxon>Acetobacterales</taxon>
        <taxon>Acetobacteraceae</taxon>
        <taxon>Gluconobacter</taxon>
    </lineage>
</organism>
<accession>Q5FNB8</accession>
<evidence type="ECO:0000255" key="1">
    <source>
        <dbReference type="HAMAP-Rule" id="MF_00501"/>
    </source>
</evidence>
<evidence type="ECO:0000305" key="2"/>
<sequence length="75" mass="8372">MRSGIHPDYHEITVIMTDGTEYKTRSCYGEPGATLRLDVDPKSHPAWTGVQRMMDTGGQVAKFNKRFAGIGTRTK</sequence>
<reference key="1">
    <citation type="journal article" date="2005" name="Nat. Biotechnol.">
        <title>Complete genome sequence of the acetic acid bacterium Gluconobacter oxydans.</title>
        <authorList>
            <person name="Prust C."/>
            <person name="Hoffmeister M."/>
            <person name="Liesegang H."/>
            <person name="Wiezer A."/>
            <person name="Fricke W.F."/>
            <person name="Ehrenreich A."/>
            <person name="Gottschalk G."/>
            <person name="Deppenmeier U."/>
        </authorList>
    </citation>
    <scope>NUCLEOTIDE SEQUENCE [LARGE SCALE GENOMIC DNA]</scope>
    <source>
        <strain>621H</strain>
    </source>
</reference>
<name>RL31_GLUOX</name>
<proteinExistence type="inferred from homology"/>
<dbReference type="EMBL" id="CP000009">
    <property type="protein sequence ID" value="AAW62129.1"/>
    <property type="molecule type" value="Genomic_DNA"/>
</dbReference>
<dbReference type="RefSeq" id="WP_011253898.1">
    <property type="nucleotide sequence ID" value="NC_006677.1"/>
</dbReference>
<dbReference type="SMR" id="Q5FNB8"/>
<dbReference type="STRING" id="290633.GOX2398"/>
<dbReference type="KEGG" id="gox:GOX2398"/>
<dbReference type="eggNOG" id="COG0254">
    <property type="taxonomic scope" value="Bacteria"/>
</dbReference>
<dbReference type="HOGENOM" id="CLU_114306_3_2_5"/>
<dbReference type="Proteomes" id="UP000006375">
    <property type="component" value="Chromosome"/>
</dbReference>
<dbReference type="GO" id="GO:1990904">
    <property type="term" value="C:ribonucleoprotein complex"/>
    <property type="evidence" value="ECO:0007669"/>
    <property type="project" value="UniProtKB-KW"/>
</dbReference>
<dbReference type="GO" id="GO:0005840">
    <property type="term" value="C:ribosome"/>
    <property type="evidence" value="ECO:0007669"/>
    <property type="project" value="UniProtKB-KW"/>
</dbReference>
<dbReference type="GO" id="GO:0019843">
    <property type="term" value="F:rRNA binding"/>
    <property type="evidence" value="ECO:0007669"/>
    <property type="project" value="UniProtKB-KW"/>
</dbReference>
<dbReference type="GO" id="GO:0003735">
    <property type="term" value="F:structural constituent of ribosome"/>
    <property type="evidence" value="ECO:0007669"/>
    <property type="project" value="InterPro"/>
</dbReference>
<dbReference type="GO" id="GO:0006412">
    <property type="term" value="P:translation"/>
    <property type="evidence" value="ECO:0007669"/>
    <property type="project" value="UniProtKB-UniRule"/>
</dbReference>
<dbReference type="Gene3D" id="4.10.830.30">
    <property type="entry name" value="Ribosomal protein L31"/>
    <property type="match status" value="1"/>
</dbReference>
<dbReference type="HAMAP" id="MF_00501">
    <property type="entry name" value="Ribosomal_bL31_1"/>
    <property type="match status" value="1"/>
</dbReference>
<dbReference type="InterPro" id="IPR034704">
    <property type="entry name" value="Ribosomal_bL28/bL31-like_sf"/>
</dbReference>
<dbReference type="InterPro" id="IPR002150">
    <property type="entry name" value="Ribosomal_bL31"/>
</dbReference>
<dbReference type="InterPro" id="IPR027491">
    <property type="entry name" value="Ribosomal_bL31_A"/>
</dbReference>
<dbReference type="InterPro" id="IPR042105">
    <property type="entry name" value="Ribosomal_bL31_sf"/>
</dbReference>
<dbReference type="NCBIfam" id="TIGR00105">
    <property type="entry name" value="L31"/>
    <property type="match status" value="1"/>
</dbReference>
<dbReference type="NCBIfam" id="NF001809">
    <property type="entry name" value="PRK00528.1"/>
    <property type="match status" value="1"/>
</dbReference>
<dbReference type="PANTHER" id="PTHR33280">
    <property type="entry name" value="50S RIBOSOMAL PROTEIN L31, CHLOROPLASTIC"/>
    <property type="match status" value="1"/>
</dbReference>
<dbReference type="PANTHER" id="PTHR33280:SF6">
    <property type="entry name" value="LARGE RIBOSOMAL SUBUNIT PROTEIN BL31A"/>
    <property type="match status" value="1"/>
</dbReference>
<dbReference type="Pfam" id="PF01197">
    <property type="entry name" value="Ribosomal_L31"/>
    <property type="match status" value="1"/>
</dbReference>
<dbReference type="PRINTS" id="PR01249">
    <property type="entry name" value="RIBOSOMALL31"/>
</dbReference>
<dbReference type="SUPFAM" id="SSF143800">
    <property type="entry name" value="L28p-like"/>
    <property type="match status" value="1"/>
</dbReference>
<dbReference type="PROSITE" id="PS01143">
    <property type="entry name" value="RIBOSOMAL_L31"/>
    <property type="match status" value="1"/>
</dbReference>